<accession>Q72WV3</accession>
<name>RS6_BACC1</name>
<gene>
    <name evidence="1" type="primary">rpsF</name>
    <name type="ordered locus">BCE_5625</name>
</gene>
<proteinExistence type="inferred from homology"/>
<organism>
    <name type="scientific">Bacillus cereus (strain ATCC 10987 / NRS 248)</name>
    <dbReference type="NCBI Taxonomy" id="222523"/>
    <lineage>
        <taxon>Bacteria</taxon>
        <taxon>Bacillati</taxon>
        <taxon>Bacillota</taxon>
        <taxon>Bacilli</taxon>
        <taxon>Bacillales</taxon>
        <taxon>Bacillaceae</taxon>
        <taxon>Bacillus</taxon>
        <taxon>Bacillus cereus group</taxon>
    </lineage>
</organism>
<comment type="function">
    <text evidence="1">Binds together with bS18 to 16S ribosomal RNA.</text>
</comment>
<comment type="similarity">
    <text evidence="1">Belongs to the bacterial ribosomal protein bS6 family.</text>
</comment>
<reference key="1">
    <citation type="journal article" date="2004" name="Nucleic Acids Res.">
        <title>The genome sequence of Bacillus cereus ATCC 10987 reveals metabolic adaptations and a large plasmid related to Bacillus anthracis pXO1.</title>
        <authorList>
            <person name="Rasko D.A."/>
            <person name="Ravel J."/>
            <person name="Oekstad O.A."/>
            <person name="Helgason E."/>
            <person name="Cer R.Z."/>
            <person name="Jiang L."/>
            <person name="Shores K.A."/>
            <person name="Fouts D.E."/>
            <person name="Tourasse N.J."/>
            <person name="Angiuoli S.V."/>
            <person name="Kolonay J.F."/>
            <person name="Nelson W.C."/>
            <person name="Kolstoe A.-B."/>
            <person name="Fraser C.M."/>
            <person name="Read T.D."/>
        </authorList>
    </citation>
    <scope>NUCLEOTIDE SEQUENCE [LARGE SCALE GENOMIC DNA]</scope>
    <source>
        <strain>ATCC 10987 / NRS 248</strain>
    </source>
</reference>
<sequence length="96" mass="11299">MRKYEIMYIIRPGVEEEAQKALVERFAGVLTNNGAEIINTKEWGKRRLAYEINDLREGFYMILNVKSNAEAINEFDRLAKINEDILRHIVVKEEEK</sequence>
<keyword id="KW-0687">Ribonucleoprotein</keyword>
<keyword id="KW-0689">Ribosomal protein</keyword>
<keyword id="KW-0694">RNA-binding</keyword>
<keyword id="KW-0699">rRNA-binding</keyword>
<evidence type="ECO:0000255" key="1">
    <source>
        <dbReference type="HAMAP-Rule" id="MF_00360"/>
    </source>
</evidence>
<evidence type="ECO:0000305" key="2"/>
<protein>
    <recommendedName>
        <fullName evidence="1">Small ribosomal subunit protein bS6</fullName>
    </recommendedName>
    <alternativeName>
        <fullName evidence="2">30S ribosomal protein S6</fullName>
    </alternativeName>
</protein>
<dbReference type="EMBL" id="AE017194">
    <property type="protein sequence ID" value="AAS44525.1"/>
    <property type="molecule type" value="Genomic_DNA"/>
</dbReference>
<dbReference type="SMR" id="Q72WV3"/>
<dbReference type="KEGG" id="bca:BCE_5625"/>
<dbReference type="HOGENOM" id="CLU_113441_5_3_9"/>
<dbReference type="Proteomes" id="UP000002527">
    <property type="component" value="Chromosome"/>
</dbReference>
<dbReference type="GO" id="GO:0005737">
    <property type="term" value="C:cytoplasm"/>
    <property type="evidence" value="ECO:0007669"/>
    <property type="project" value="UniProtKB-ARBA"/>
</dbReference>
<dbReference type="GO" id="GO:1990904">
    <property type="term" value="C:ribonucleoprotein complex"/>
    <property type="evidence" value="ECO:0007669"/>
    <property type="project" value="UniProtKB-KW"/>
</dbReference>
<dbReference type="GO" id="GO:0005840">
    <property type="term" value="C:ribosome"/>
    <property type="evidence" value="ECO:0007669"/>
    <property type="project" value="UniProtKB-KW"/>
</dbReference>
<dbReference type="GO" id="GO:0070181">
    <property type="term" value="F:small ribosomal subunit rRNA binding"/>
    <property type="evidence" value="ECO:0007669"/>
    <property type="project" value="TreeGrafter"/>
</dbReference>
<dbReference type="GO" id="GO:0003735">
    <property type="term" value="F:structural constituent of ribosome"/>
    <property type="evidence" value="ECO:0007669"/>
    <property type="project" value="InterPro"/>
</dbReference>
<dbReference type="GO" id="GO:0006412">
    <property type="term" value="P:translation"/>
    <property type="evidence" value="ECO:0007669"/>
    <property type="project" value="UniProtKB-UniRule"/>
</dbReference>
<dbReference type="CDD" id="cd00473">
    <property type="entry name" value="bS6"/>
    <property type="match status" value="1"/>
</dbReference>
<dbReference type="FunFam" id="3.30.70.60:FF:000002">
    <property type="entry name" value="30S ribosomal protein S6"/>
    <property type="match status" value="1"/>
</dbReference>
<dbReference type="Gene3D" id="3.30.70.60">
    <property type="match status" value="1"/>
</dbReference>
<dbReference type="HAMAP" id="MF_00360">
    <property type="entry name" value="Ribosomal_bS6"/>
    <property type="match status" value="1"/>
</dbReference>
<dbReference type="InterPro" id="IPR000529">
    <property type="entry name" value="Ribosomal_bS6"/>
</dbReference>
<dbReference type="InterPro" id="IPR020815">
    <property type="entry name" value="Ribosomal_bS6_CS"/>
</dbReference>
<dbReference type="InterPro" id="IPR035980">
    <property type="entry name" value="Ribosomal_bS6_sf"/>
</dbReference>
<dbReference type="InterPro" id="IPR020814">
    <property type="entry name" value="Ribosomal_S6_plastid/chlpt"/>
</dbReference>
<dbReference type="InterPro" id="IPR014717">
    <property type="entry name" value="Transl_elong_EF1B/ribsomal_bS6"/>
</dbReference>
<dbReference type="NCBIfam" id="TIGR00166">
    <property type="entry name" value="S6"/>
    <property type="match status" value="1"/>
</dbReference>
<dbReference type="PANTHER" id="PTHR21011">
    <property type="entry name" value="MITOCHONDRIAL 28S RIBOSOMAL PROTEIN S6"/>
    <property type="match status" value="1"/>
</dbReference>
<dbReference type="PANTHER" id="PTHR21011:SF1">
    <property type="entry name" value="SMALL RIBOSOMAL SUBUNIT PROTEIN BS6M"/>
    <property type="match status" value="1"/>
</dbReference>
<dbReference type="Pfam" id="PF01250">
    <property type="entry name" value="Ribosomal_S6"/>
    <property type="match status" value="1"/>
</dbReference>
<dbReference type="SUPFAM" id="SSF54995">
    <property type="entry name" value="Ribosomal protein S6"/>
    <property type="match status" value="1"/>
</dbReference>
<dbReference type="PROSITE" id="PS01048">
    <property type="entry name" value="RIBOSOMAL_S6"/>
    <property type="match status" value="1"/>
</dbReference>
<feature type="chain" id="PRO_0000176718" description="Small ribosomal subunit protein bS6">
    <location>
        <begin position="1"/>
        <end position="96"/>
    </location>
</feature>